<name>GLTA_WHEAT</name>
<feature type="signal peptide" evidence="1">
    <location>
        <begin position="1"/>
        <end position="19"/>
    </location>
</feature>
<feature type="chain" id="PRO_0000032211" description="Glutenin, low molecular weight subunit">
    <location>
        <begin position="20"/>
        <end position="356"/>
    </location>
</feature>
<feature type="region of interest" description="Disordered" evidence="2">
    <location>
        <begin position="20"/>
        <end position="179"/>
    </location>
</feature>
<evidence type="ECO:0000255" key="1"/>
<evidence type="ECO:0000256" key="2">
    <source>
        <dbReference type="SAM" id="MobiDB-lite"/>
    </source>
</evidence>
<evidence type="ECO:0000305" key="3"/>
<organism>
    <name type="scientific">Triticum aestivum</name>
    <name type="common">Wheat</name>
    <dbReference type="NCBI Taxonomy" id="4565"/>
    <lineage>
        <taxon>Eukaryota</taxon>
        <taxon>Viridiplantae</taxon>
        <taxon>Streptophyta</taxon>
        <taxon>Embryophyta</taxon>
        <taxon>Tracheophyta</taxon>
        <taxon>Spermatophyta</taxon>
        <taxon>Magnoliopsida</taxon>
        <taxon>Liliopsida</taxon>
        <taxon>Poales</taxon>
        <taxon>Poaceae</taxon>
        <taxon>BOP clade</taxon>
        <taxon>Pooideae</taxon>
        <taxon>Triticodae</taxon>
        <taxon>Triticeae</taxon>
        <taxon>Triticinae</taxon>
        <taxon>Triticum</taxon>
    </lineage>
</organism>
<comment type="function">
    <text>Glutenins are high-molecular weight seed storage proteins of wheat endosperm. Thought to be responsible for the visco-elastic property of wheat dough.</text>
</comment>
<comment type="subunit">
    <text>Disulfide-bridge linked aggregates.</text>
</comment>
<comment type="miscellaneous">
    <text>Glutenins are coded by several genes on each of the group 1 chromosomes of wheat.</text>
</comment>
<comment type="similarity">
    <text evidence="3">Belongs to the gliadin/glutenin family.</text>
</comment>
<keyword id="KW-1015">Disulfide bond</keyword>
<keyword id="KW-1185">Reference proteome</keyword>
<keyword id="KW-0677">Repeat</keyword>
<keyword id="KW-0708">Seed storage protein</keyword>
<keyword id="KW-0732">Signal</keyword>
<keyword id="KW-0758">Storage protein</keyword>
<reference key="1">
    <citation type="journal article" date="1988" name="Nucleic Acids Res.">
        <title>Nucleotide sequence and encoded amino acid sequence of a genomic gene region for a low molecular weight glutenin.</title>
        <authorList>
            <person name="Pitts E.G."/>
            <person name="Rafalski J.A."/>
            <person name="Hedgcoth C."/>
        </authorList>
    </citation>
    <scope>NUCLEOTIDE SEQUENCE [GENOMIC DNA]</scope>
    <source>
        <strain>cv. Yamhill</strain>
    </source>
</reference>
<proteinExistence type="inferred from homology"/>
<dbReference type="EMBL" id="X07747">
    <property type="protein sequence ID" value="CAA30570.1"/>
    <property type="molecule type" value="Genomic_DNA"/>
</dbReference>
<dbReference type="PIR" id="S01992">
    <property type="entry name" value="S01992"/>
</dbReference>
<dbReference type="STRING" id="4565.P10385"/>
<dbReference type="Allergome" id="2674">
    <property type="allergen name" value="Tri a 36"/>
</dbReference>
<dbReference type="Proteomes" id="UP000019116">
    <property type="component" value="Unplaced"/>
</dbReference>
<dbReference type="GO" id="GO:0045735">
    <property type="term" value="F:nutrient reservoir activity"/>
    <property type="evidence" value="ECO:0007669"/>
    <property type="project" value="UniProtKB-KW"/>
</dbReference>
<dbReference type="Gene3D" id="1.10.110.10">
    <property type="entry name" value="Plant lipid-transfer and hydrophobic proteins"/>
    <property type="match status" value="1"/>
</dbReference>
<dbReference type="InterPro" id="IPR036312">
    <property type="entry name" value="Bifun_inhib/LTP/seed_sf"/>
</dbReference>
<dbReference type="InterPro" id="IPR016140">
    <property type="entry name" value="Bifunc_inhib/LTP/seed_store"/>
</dbReference>
<dbReference type="InterPro" id="IPR001954">
    <property type="entry name" value="Glia_glutenin"/>
</dbReference>
<dbReference type="PANTHER" id="PTHR33454:SF18">
    <property type="entry name" value="GLUTENIN, LOW MOLECULAR WEIGHT SUBUNIT"/>
    <property type="match status" value="1"/>
</dbReference>
<dbReference type="PANTHER" id="PTHR33454">
    <property type="entry name" value="PROLAMIN PPROL 14P"/>
    <property type="match status" value="1"/>
</dbReference>
<dbReference type="Pfam" id="PF13016">
    <property type="entry name" value="Gliadin"/>
    <property type="match status" value="1"/>
</dbReference>
<dbReference type="PRINTS" id="PR00208">
    <property type="entry name" value="GLIADGLUTEN"/>
</dbReference>
<dbReference type="PRINTS" id="PR00209">
    <property type="entry name" value="GLIADIN"/>
</dbReference>
<dbReference type="SUPFAM" id="SSF47699">
    <property type="entry name" value="Bifunctional inhibitor/lipid-transfer protein/seed storage 2S albumin"/>
    <property type="match status" value="2"/>
</dbReference>
<protein>
    <recommendedName>
        <fullName>Glutenin, low molecular weight subunit</fullName>
    </recommendedName>
</protein>
<sequence length="356" mass="41020">MKTFLVFALLALAAASAVAQISQQQQAPPFSQQQQPPFSQQQQPPFSQQQQSPFSQQQQQPPFAQQQQPPFSQQPPISQQQQPPFSQQQQPQFSQQQQPPYSQQQQPPYSQQQQPPFSQQQQPPFSQQQQQPPFTQQQQQQQQQQPFTQQQQPPFSQQPPISQQQQPPFLQQQRPPFSRQQQIPVIHPSVLQQLNPCKVFLQQQCIPVAMQRCLARSQMLQQSICHVMQQQCCQQLRQIPEQSRHESIRAIIYSIILQQQQQQQQQQQQQQGQSIIQYQQQQPQQLGQCVSQPLQQLQQQLGQQPQQQQLAHQIAQLEVMTSIALRTLPTMCNVNVPLYETTTSVPLGVGIGVGVY</sequence>
<accession>P10385</accession>